<evidence type="ECO:0000250" key="1"/>
<evidence type="ECO:0000255" key="2">
    <source>
        <dbReference type="PROSITE-ProRule" id="PRU00335"/>
    </source>
</evidence>
<organism>
    <name type="scientific">Escherichia coli O6:H1 (strain CFT073 / ATCC 700928 / UPEC)</name>
    <dbReference type="NCBI Taxonomy" id="199310"/>
    <lineage>
        <taxon>Bacteria</taxon>
        <taxon>Pseudomonadati</taxon>
        <taxon>Pseudomonadota</taxon>
        <taxon>Gammaproteobacteria</taxon>
        <taxon>Enterobacterales</taxon>
        <taxon>Enterobacteriaceae</taxon>
        <taxon>Escherichia</taxon>
    </lineage>
</organism>
<comment type="function">
    <text evidence="1">Repressor for the uidRABC (gusRABC) operon.</text>
</comment>
<proteinExistence type="inferred from homology"/>
<keyword id="KW-0238">DNA-binding</keyword>
<keyword id="KW-1185">Reference proteome</keyword>
<keyword id="KW-0678">Repressor</keyword>
<keyword id="KW-0804">Transcription</keyword>
<keyword id="KW-0805">Transcription regulation</keyword>
<name>UIDR_ECOL6</name>
<accession>P0ACT7</accession>
<accession>P76892</accession>
<accession>P76895</accession>
<accession>Q59431</accession>
<dbReference type="EMBL" id="AE014075">
    <property type="protein sequence ID" value="AAN80470.1"/>
    <property type="molecule type" value="Genomic_DNA"/>
</dbReference>
<dbReference type="RefSeq" id="WP_000969092.1">
    <property type="nucleotide sequence ID" value="NZ_CP051263.1"/>
</dbReference>
<dbReference type="SMR" id="P0ACT7"/>
<dbReference type="STRING" id="199310.c2010"/>
<dbReference type="GeneID" id="75171678"/>
<dbReference type="KEGG" id="ecc:c2010"/>
<dbReference type="eggNOG" id="COG1309">
    <property type="taxonomic scope" value="Bacteria"/>
</dbReference>
<dbReference type="HOGENOM" id="CLU_069356_15_12_6"/>
<dbReference type="BioCyc" id="ECOL199310:C2010-MONOMER"/>
<dbReference type="Proteomes" id="UP000001410">
    <property type="component" value="Chromosome"/>
</dbReference>
<dbReference type="GO" id="GO:0003700">
    <property type="term" value="F:DNA-binding transcription factor activity"/>
    <property type="evidence" value="ECO:0007669"/>
    <property type="project" value="TreeGrafter"/>
</dbReference>
<dbReference type="GO" id="GO:0000976">
    <property type="term" value="F:transcription cis-regulatory region binding"/>
    <property type="evidence" value="ECO:0007669"/>
    <property type="project" value="TreeGrafter"/>
</dbReference>
<dbReference type="Gene3D" id="1.10.357.10">
    <property type="entry name" value="Tetracycline Repressor, domain 2"/>
    <property type="match status" value="1"/>
</dbReference>
<dbReference type="InterPro" id="IPR023772">
    <property type="entry name" value="DNA-bd_HTH_TetR-type_CS"/>
</dbReference>
<dbReference type="InterPro" id="IPR009057">
    <property type="entry name" value="Homeodomain-like_sf"/>
</dbReference>
<dbReference type="InterPro" id="IPR050109">
    <property type="entry name" value="HTH-type_TetR-like_transc_reg"/>
</dbReference>
<dbReference type="InterPro" id="IPR001647">
    <property type="entry name" value="HTH_TetR"/>
</dbReference>
<dbReference type="InterPro" id="IPR036271">
    <property type="entry name" value="Tet_transcr_reg_TetR-rel_C_sf"/>
</dbReference>
<dbReference type="PANTHER" id="PTHR30055">
    <property type="entry name" value="HTH-TYPE TRANSCRIPTIONAL REGULATOR RUTR"/>
    <property type="match status" value="1"/>
</dbReference>
<dbReference type="PANTHER" id="PTHR30055:SF223">
    <property type="entry name" value="HTH-TYPE TRANSCRIPTIONAL REGULATOR UIDR"/>
    <property type="match status" value="1"/>
</dbReference>
<dbReference type="Pfam" id="PF00440">
    <property type="entry name" value="TetR_N"/>
    <property type="match status" value="1"/>
</dbReference>
<dbReference type="PRINTS" id="PR00455">
    <property type="entry name" value="HTHTETR"/>
</dbReference>
<dbReference type="SUPFAM" id="SSF46689">
    <property type="entry name" value="Homeodomain-like"/>
    <property type="match status" value="1"/>
</dbReference>
<dbReference type="SUPFAM" id="SSF48498">
    <property type="entry name" value="Tetracyclin repressor-like, C-terminal domain"/>
    <property type="match status" value="1"/>
</dbReference>
<dbReference type="PROSITE" id="PS01081">
    <property type="entry name" value="HTH_TETR_1"/>
    <property type="match status" value="1"/>
</dbReference>
<dbReference type="PROSITE" id="PS50977">
    <property type="entry name" value="HTH_TETR_2"/>
    <property type="match status" value="1"/>
</dbReference>
<reference key="1">
    <citation type="journal article" date="2002" name="Proc. Natl. Acad. Sci. U.S.A.">
        <title>Extensive mosaic structure revealed by the complete genome sequence of uropathogenic Escherichia coli.</title>
        <authorList>
            <person name="Welch R.A."/>
            <person name="Burland V."/>
            <person name="Plunkett G. III"/>
            <person name="Redford P."/>
            <person name="Roesch P."/>
            <person name="Rasko D."/>
            <person name="Buckles E.L."/>
            <person name="Liou S.-R."/>
            <person name="Boutin A."/>
            <person name="Hackett J."/>
            <person name="Stroud D."/>
            <person name="Mayhew G.F."/>
            <person name="Rose D.J."/>
            <person name="Zhou S."/>
            <person name="Schwartz D.C."/>
            <person name="Perna N.T."/>
            <person name="Mobley H.L.T."/>
            <person name="Donnenberg M.S."/>
            <person name="Blattner F.R."/>
        </authorList>
    </citation>
    <scope>NUCLEOTIDE SEQUENCE [LARGE SCALE GENOMIC DNA]</scope>
    <source>
        <strain>CFT073 / ATCC 700928 / UPEC</strain>
    </source>
</reference>
<protein>
    <recommendedName>
        <fullName>HTH-type transcriptional regulator UidR</fullName>
    </recommendedName>
    <alternativeName>
        <fullName>Uid operon repressor</fullName>
    </alternativeName>
</protein>
<feature type="chain" id="PRO_0000070630" description="HTH-type transcriptional regulator UidR">
    <location>
        <begin position="1"/>
        <end position="196"/>
    </location>
</feature>
<feature type="domain" description="HTH tetR-type" evidence="2">
    <location>
        <begin position="10"/>
        <end position="70"/>
    </location>
</feature>
<feature type="DNA-binding region" description="H-T-H motif" evidence="2">
    <location>
        <begin position="33"/>
        <end position="52"/>
    </location>
</feature>
<gene>
    <name type="primary">uidR</name>
    <name type="ordered locus">c2010</name>
</gene>
<sequence length="196" mass="21799">MMDNMQTEAQPTRTRILNAAREIFSENGFHSASMKAICKSCAISPGTLYHHFISKEALIQAIILQDQERALARFREPIEGIHFVDYMVESIVSLTHEAFGQRALVVEIMAEGMRNPQVAAMLKNKHMTITEFVAQRMRDAQQKGEISPDINTAMTSRLLLDLTYGVLADIEAEDLAREASFAQGLRAMIGGILTAS</sequence>